<gene>
    <name evidence="1" type="primary">dnaA</name>
    <name type="ordered locus">Cbei_0001</name>
</gene>
<reference key="1">
    <citation type="submission" date="2007-06" db="EMBL/GenBank/DDBJ databases">
        <title>Complete sequence of Clostridium beijerinckii NCIMB 8052.</title>
        <authorList>
            <consortium name="US DOE Joint Genome Institute"/>
            <person name="Copeland A."/>
            <person name="Lucas S."/>
            <person name="Lapidus A."/>
            <person name="Barry K."/>
            <person name="Detter J.C."/>
            <person name="Glavina del Rio T."/>
            <person name="Hammon N."/>
            <person name="Israni S."/>
            <person name="Dalin E."/>
            <person name="Tice H."/>
            <person name="Pitluck S."/>
            <person name="Sims D."/>
            <person name="Brettin T."/>
            <person name="Bruce D."/>
            <person name="Tapia R."/>
            <person name="Brainard J."/>
            <person name="Schmutz J."/>
            <person name="Larimer F."/>
            <person name="Land M."/>
            <person name="Hauser L."/>
            <person name="Kyrpides N."/>
            <person name="Mikhailova N."/>
            <person name="Bennet G."/>
            <person name="Cann I."/>
            <person name="Chen J.-S."/>
            <person name="Contreras A.L."/>
            <person name="Jones D."/>
            <person name="Kashket E."/>
            <person name="Mitchell W."/>
            <person name="Stoddard S."/>
            <person name="Schwarz W."/>
            <person name="Qureshi N."/>
            <person name="Young M."/>
            <person name="Shi Z."/>
            <person name="Ezeji T."/>
            <person name="White B."/>
            <person name="Blaschek H."/>
            <person name="Richardson P."/>
        </authorList>
    </citation>
    <scope>NUCLEOTIDE SEQUENCE [LARGE SCALE GENOMIC DNA]</scope>
    <source>
        <strain>ATCC 51743 / NCIMB 8052</strain>
    </source>
</reference>
<proteinExistence type="inferred from homology"/>
<evidence type="ECO:0000255" key="1">
    <source>
        <dbReference type="HAMAP-Rule" id="MF_00377"/>
    </source>
</evidence>
<feature type="chain" id="PRO_1000079944" description="Chromosomal replication initiator protein DnaA">
    <location>
        <begin position="1"/>
        <end position="449"/>
    </location>
</feature>
<feature type="region of interest" description="Domain I, interacts with DnaA modulators" evidence="1">
    <location>
        <begin position="1"/>
        <end position="73"/>
    </location>
</feature>
<feature type="region of interest" description="Domain II" evidence="1">
    <location>
        <begin position="73"/>
        <end position="110"/>
    </location>
</feature>
<feature type="region of interest" description="Domain III, AAA+ region" evidence="1">
    <location>
        <begin position="111"/>
        <end position="327"/>
    </location>
</feature>
<feature type="region of interest" description="Domain IV, binds dsDNA" evidence="1">
    <location>
        <begin position="328"/>
        <end position="449"/>
    </location>
</feature>
<feature type="binding site" evidence="1">
    <location>
        <position position="155"/>
    </location>
    <ligand>
        <name>ATP</name>
        <dbReference type="ChEBI" id="CHEBI:30616"/>
    </ligand>
</feature>
<feature type="binding site" evidence="1">
    <location>
        <position position="157"/>
    </location>
    <ligand>
        <name>ATP</name>
        <dbReference type="ChEBI" id="CHEBI:30616"/>
    </ligand>
</feature>
<feature type="binding site" evidence="1">
    <location>
        <position position="158"/>
    </location>
    <ligand>
        <name>ATP</name>
        <dbReference type="ChEBI" id="CHEBI:30616"/>
    </ligand>
</feature>
<feature type="binding site" evidence="1">
    <location>
        <position position="159"/>
    </location>
    <ligand>
        <name>ATP</name>
        <dbReference type="ChEBI" id="CHEBI:30616"/>
    </ligand>
</feature>
<comment type="function">
    <text evidence="1">Plays an essential role in the initiation and regulation of chromosomal replication. ATP-DnaA binds to the origin of replication (oriC) to initiate formation of the DNA replication initiation complex once per cell cycle. Binds the DnaA box (a 9 base pair repeat at the origin) and separates the double-stranded (ds)DNA. Forms a right-handed helical filament on oriC DNA; dsDNA binds to the exterior of the filament while single-stranded (ss)DNA is stabiized in the filament's interior. The ATP-DnaA-oriC complex binds and stabilizes one strand of the AT-rich DNA unwinding element (DUE), permitting loading of DNA polymerase. After initiation quickly degrades to an ADP-DnaA complex that is not apt for DNA replication. Binds acidic phospholipids.</text>
</comment>
<comment type="subunit">
    <text evidence="1">Oligomerizes as a right-handed, spiral filament on DNA at oriC.</text>
</comment>
<comment type="subcellular location">
    <subcellularLocation>
        <location evidence="1">Cytoplasm</location>
    </subcellularLocation>
</comment>
<comment type="domain">
    <text evidence="1">Domain I is involved in oligomerization and binding regulators, domain II is flexibile and of varying length in different bacteria, domain III forms the AAA+ region, while domain IV binds dsDNA.</text>
</comment>
<comment type="similarity">
    <text evidence="1">Belongs to the DnaA family.</text>
</comment>
<dbReference type="EMBL" id="CP000721">
    <property type="protein sequence ID" value="ABR32191.1"/>
    <property type="molecule type" value="Genomic_DNA"/>
</dbReference>
<dbReference type="RefSeq" id="WP_011967366.1">
    <property type="nucleotide sequence ID" value="NC_009617.1"/>
</dbReference>
<dbReference type="SMR" id="A6LPB1"/>
<dbReference type="KEGG" id="cbe:Cbei_0001"/>
<dbReference type="eggNOG" id="COG0593">
    <property type="taxonomic scope" value="Bacteria"/>
</dbReference>
<dbReference type="HOGENOM" id="CLU_026910_3_1_9"/>
<dbReference type="Proteomes" id="UP000000565">
    <property type="component" value="Chromosome"/>
</dbReference>
<dbReference type="GO" id="GO:0005737">
    <property type="term" value="C:cytoplasm"/>
    <property type="evidence" value="ECO:0007669"/>
    <property type="project" value="UniProtKB-SubCell"/>
</dbReference>
<dbReference type="GO" id="GO:0005886">
    <property type="term" value="C:plasma membrane"/>
    <property type="evidence" value="ECO:0007669"/>
    <property type="project" value="TreeGrafter"/>
</dbReference>
<dbReference type="GO" id="GO:0005524">
    <property type="term" value="F:ATP binding"/>
    <property type="evidence" value="ECO:0007669"/>
    <property type="project" value="UniProtKB-UniRule"/>
</dbReference>
<dbReference type="GO" id="GO:0016887">
    <property type="term" value="F:ATP hydrolysis activity"/>
    <property type="evidence" value="ECO:0007669"/>
    <property type="project" value="InterPro"/>
</dbReference>
<dbReference type="GO" id="GO:0003688">
    <property type="term" value="F:DNA replication origin binding"/>
    <property type="evidence" value="ECO:0007669"/>
    <property type="project" value="UniProtKB-UniRule"/>
</dbReference>
<dbReference type="GO" id="GO:0008289">
    <property type="term" value="F:lipid binding"/>
    <property type="evidence" value="ECO:0007669"/>
    <property type="project" value="UniProtKB-KW"/>
</dbReference>
<dbReference type="GO" id="GO:0006270">
    <property type="term" value="P:DNA replication initiation"/>
    <property type="evidence" value="ECO:0007669"/>
    <property type="project" value="UniProtKB-UniRule"/>
</dbReference>
<dbReference type="GO" id="GO:0006275">
    <property type="term" value="P:regulation of DNA replication"/>
    <property type="evidence" value="ECO:0007669"/>
    <property type="project" value="UniProtKB-UniRule"/>
</dbReference>
<dbReference type="CDD" id="cd00009">
    <property type="entry name" value="AAA"/>
    <property type="match status" value="1"/>
</dbReference>
<dbReference type="CDD" id="cd06571">
    <property type="entry name" value="Bac_DnaA_C"/>
    <property type="match status" value="1"/>
</dbReference>
<dbReference type="FunFam" id="1.10.1750.10:FF:000003">
    <property type="entry name" value="Chromosomal replication initiator protein DnaA"/>
    <property type="match status" value="1"/>
</dbReference>
<dbReference type="FunFam" id="1.10.8.60:FF:000003">
    <property type="entry name" value="Chromosomal replication initiator protein DnaA"/>
    <property type="match status" value="1"/>
</dbReference>
<dbReference type="FunFam" id="3.40.50.300:FF:000150">
    <property type="entry name" value="Chromosomal replication initiator protein DnaA"/>
    <property type="match status" value="1"/>
</dbReference>
<dbReference type="Gene3D" id="1.10.1750.10">
    <property type="match status" value="1"/>
</dbReference>
<dbReference type="Gene3D" id="1.10.8.60">
    <property type="match status" value="1"/>
</dbReference>
<dbReference type="Gene3D" id="3.30.300.180">
    <property type="match status" value="1"/>
</dbReference>
<dbReference type="Gene3D" id="3.40.50.300">
    <property type="entry name" value="P-loop containing nucleotide triphosphate hydrolases"/>
    <property type="match status" value="1"/>
</dbReference>
<dbReference type="HAMAP" id="MF_00377">
    <property type="entry name" value="DnaA_bact"/>
    <property type="match status" value="1"/>
</dbReference>
<dbReference type="InterPro" id="IPR003593">
    <property type="entry name" value="AAA+_ATPase"/>
</dbReference>
<dbReference type="InterPro" id="IPR001957">
    <property type="entry name" value="Chromosome_initiator_DnaA"/>
</dbReference>
<dbReference type="InterPro" id="IPR020591">
    <property type="entry name" value="Chromosome_initiator_DnaA-like"/>
</dbReference>
<dbReference type="InterPro" id="IPR018312">
    <property type="entry name" value="Chromosome_initiator_DnaA_CS"/>
</dbReference>
<dbReference type="InterPro" id="IPR013159">
    <property type="entry name" value="DnaA_C"/>
</dbReference>
<dbReference type="InterPro" id="IPR013317">
    <property type="entry name" value="DnaA_dom"/>
</dbReference>
<dbReference type="InterPro" id="IPR024633">
    <property type="entry name" value="DnaA_N_dom"/>
</dbReference>
<dbReference type="InterPro" id="IPR038454">
    <property type="entry name" value="DnaA_N_sf"/>
</dbReference>
<dbReference type="InterPro" id="IPR027417">
    <property type="entry name" value="P-loop_NTPase"/>
</dbReference>
<dbReference type="InterPro" id="IPR010921">
    <property type="entry name" value="Trp_repressor/repl_initiator"/>
</dbReference>
<dbReference type="NCBIfam" id="TIGR00362">
    <property type="entry name" value="DnaA"/>
    <property type="match status" value="1"/>
</dbReference>
<dbReference type="NCBIfam" id="NF010686">
    <property type="entry name" value="PRK14086.1"/>
    <property type="match status" value="1"/>
</dbReference>
<dbReference type="PANTHER" id="PTHR30050">
    <property type="entry name" value="CHROMOSOMAL REPLICATION INITIATOR PROTEIN DNAA"/>
    <property type="match status" value="1"/>
</dbReference>
<dbReference type="PANTHER" id="PTHR30050:SF2">
    <property type="entry name" value="CHROMOSOMAL REPLICATION INITIATOR PROTEIN DNAA"/>
    <property type="match status" value="1"/>
</dbReference>
<dbReference type="Pfam" id="PF00308">
    <property type="entry name" value="Bac_DnaA"/>
    <property type="match status" value="1"/>
</dbReference>
<dbReference type="Pfam" id="PF08299">
    <property type="entry name" value="Bac_DnaA_C"/>
    <property type="match status" value="1"/>
</dbReference>
<dbReference type="Pfam" id="PF11638">
    <property type="entry name" value="DnaA_N"/>
    <property type="match status" value="1"/>
</dbReference>
<dbReference type="PRINTS" id="PR00051">
    <property type="entry name" value="DNAA"/>
</dbReference>
<dbReference type="SMART" id="SM00382">
    <property type="entry name" value="AAA"/>
    <property type="match status" value="1"/>
</dbReference>
<dbReference type="SMART" id="SM00760">
    <property type="entry name" value="Bac_DnaA_C"/>
    <property type="match status" value="1"/>
</dbReference>
<dbReference type="SUPFAM" id="SSF52540">
    <property type="entry name" value="P-loop containing nucleoside triphosphate hydrolases"/>
    <property type="match status" value="1"/>
</dbReference>
<dbReference type="SUPFAM" id="SSF48295">
    <property type="entry name" value="TrpR-like"/>
    <property type="match status" value="1"/>
</dbReference>
<dbReference type="PROSITE" id="PS01008">
    <property type="entry name" value="DNAA"/>
    <property type="match status" value="1"/>
</dbReference>
<accession>A6LPB1</accession>
<organism>
    <name type="scientific">Clostridium beijerinckii (strain ATCC 51743 / NCIMB 8052)</name>
    <name type="common">Clostridium acetobutylicum</name>
    <dbReference type="NCBI Taxonomy" id="290402"/>
    <lineage>
        <taxon>Bacteria</taxon>
        <taxon>Bacillati</taxon>
        <taxon>Bacillota</taxon>
        <taxon>Clostridia</taxon>
        <taxon>Eubacteriales</taxon>
        <taxon>Clostridiaceae</taxon>
        <taxon>Clostridium</taxon>
    </lineage>
</organism>
<protein>
    <recommendedName>
        <fullName evidence="1">Chromosomal replication initiator protein DnaA</fullName>
    </recommendedName>
</protein>
<keyword id="KW-0067">ATP-binding</keyword>
<keyword id="KW-0963">Cytoplasm</keyword>
<keyword id="KW-0235">DNA replication</keyword>
<keyword id="KW-0238">DNA-binding</keyword>
<keyword id="KW-0446">Lipid-binding</keyword>
<keyword id="KW-0547">Nucleotide-binding</keyword>
<sequence>MDADLKNLWDKTLDIIKSELSEVSFNTWIKSCEPLSISSNTLKISVPNSFTQDILDKRYKDLVANSIKAVCSKLYTIEFIIMSEIYEKEEIKSSSNQKSKAIVVNDEMSSTLNPKYTFNSFVIGNSNRFAHAASLAVAESPAKAYNPLFIYGGVGLGKTHLMHAIGHYILDGNPNAKVVYVSSEKFTNELINAIKDDKNEEFRNKYRNVDILLIDDIQFIAGKERTQEEFFHTFNALHDANKQIILSSDRPPKEIPTLEDRLRSRFEWGLIADIQVPDFETRMAILKKKADVENLNVANEVMGYIATKIKSNIRELEGALIRIIAYSSLTNREVTVDLATEALKDIISKKQGKHVTIDLIQDVVSSYFNLRVEDLKSQRRTRNVAYPRQIAMYLSRKLTDMSLPKIGEEFGGRDHTTVIHAYEKISENLKTDDSLQSTVNDITKKLTQN</sequence>
<name>DNAA_CLOB8</name>